<comment type="function">
    <text evidence="1 4">Bifunctional enzyme; part of the cluster involved in the biosynthesis of biotin (also known as vitamin B8 or vitamin H), a water-soluble vitamin that functions as a prosthetic group of many carboxylases, such as acetyl-CoA carboxylase and pyruvate carboxylase (PubMed:20713166). Catalyzes a mechanistically unusual reaction, the ATP-dependent insertion of CO2 between the N7 and N8 nitrogen atoms of 7,8-diaminopelargonic acid (DAPA) to form an ureido ring (PubMed:20713166). Also catalyzes the transfer of the alpha-amino group from S-adenosyl-L-methionine (SAM) to 7-keto-8-aminopelargonic acid (KAPA) to form 7,8-diaminopelargonic acid (DAPA) (PubMed:20713166). It is the only animotransferase known to utilize SAM as an amino donor (By similarity).</text>
</comment>
<comment type="catalytic activity">
    <reaction evidence="7">
        <text>(7R,8S)-7,8-diammoniononanoate + CO2 + ATP = (4R,5S)-dethiobiotin + ADP + phosphate + 3 H(+)</text>
        <dbReference type="Rhea" id="RHEA:15805"/>
        <dbReference type="ChEBI" id="CHEBI:15378"/>
        <dbReference type="ChEBI" id="CHEBI:16526"/>
        <dbReference type="ChEBI" id="CHEBI:30616"/>
        <dbReference type="ChEBI" id="CHEBI:43474"/>
        <dbReference type="ChEBI" id="CHEBI:149469"/>
        <dbReference type="ChEBI" id="CHEBI:149473"/>
        <dbReference type="ChEBI" id="CHEBI:456216"/>
        <dbReference type="EC" id="6.3.3.3"/>
    </reaction>
</comment>
<comment type="catalytic activity">
    <reaction evidence="7">
        <text>(8S)-8-amino-7-oxononanoate + S-adenosyl-L-methionine = S-adenosyl-4-methylsulfanyl-2-oxobutanoate + (7R,8S)-7,8-diammoniononanoate</text>
        <dbReference type="Rhea" id="RHEA:16861"/>
        <dbReference type="ChEBI" id="CHEBI:16490"/>
        <dbReference type="ChEBI" id="CHEBI:59789"/>
        <dbReference type="ChEBI" id="CHEBI:149468"/>
        <dbReference type="ChEBI" id="CHEBI:149469"/>
        <dbReference type="EC" id="2.6.1.62"/>
    </reaction>
</comment>
<comment type="cofactor">
    <cofactor evidence="1">
        <name>Mg(2+)</name>
        <dbReference type="ChEBI" id="CHEBI:18420"/>
    </cofactor>
</comment>
<comment type="cofactor">
    <cofactor evidence="1">
        <name>pyridoxal 5'-phosphate</name>
        <dbReference type="ChEBI" id="CHEBI:597326"/>
    </cofactor>
</comment>
<comment type="pathway">
    <text evidence="7">Cofactor biosynthesis; biotin biosynthesis; biotin from 7,8-diaminononanoate: step 1/2.</text>
</comment>
<comment type="pathway">
    <text evidence="7">Cofactor biosynthesis; biotin biosynthesis; 7,8-diaminononanoate from 8-amino-7-oxononanoate (SAM route): step 1/1.</text>
</comment>
<comment type="subunit">
    <text evidence="1">Homodimer.</text>
</comment>
<comment type="subcellular location">
    <subcellularLocation>
        <location evidence="1">Mitochondrion matrix</location>
    </subcellularLocation>
</comment>
<comment type="induction">
    <text evidence="4">Expression is increased when transferring biotin auxotrophic mutant mycelia from biotin-supplemented medium to biotin-deficient medium.</text>
</comment>
<comment type="biotechnology">
    <text evidence="4">Recovery of biotin-prototrophic clones from transformation of biotin-auxotrophic mutants suggests that bioDA could be usedas a new and convenient genetic marker for transformation.</text>
</comment>
<comment type="similarity">
    <text evidence="6">In the N-terminal section; belongs to the dethiobiotin synthetase family.</text>
</comment>
<comment type="similarity">
    <text evidence="6">In the C-terminal section; belongs to the class-III pyridoxal-phosphate-dependent aminotransferase family. BioA subfamily.</text>
</comment>
<protein>
    <recommendedName>
        <fullName evidence="5">Bifunctional dethiobiotin synthetase/adenosylmethionine-8-amino-7-oxononanoate aminotransferase</fullName>
    </recommendedName>
    <domain>
        <recommendedName>
            <fullName evidence="5">Dethiobiotin synthetase</fullName>
            <shortName evidence="5">DTB synthetase</shortName>
            <shortName evidence="5">DTBS</shortName>
            <ecNumber evidence="7">6.3.3.3</ecNumber>
        </recommendedName>
    </domain>
    <domain>
        <recommendedName>
            <fullName evidence="5">7,8-diamino-pelargonic acid aminotransferase</fullName>
            <shortName evidence="5">DAPA AT</shortName>
            <shortName evidence="5">DAPA aminotransferase</shortName>
            <ecNumber evidence="7">2.6.1.62</ecNumber>
        </recommendedName>
        <alternativeName>
            <fullName evidence="1">7,8-diaminononanoate synthase</fullName>
            <shortName evidence="1">DANS</shortName>
        </alternativeName>
        <alternativeName>
            <fullName evidence="1">Adenosylmethionine-8-amino-7-oxononanoate aminotransferase</fullName>
        </alternativeName>
        <alternativeName>
            <fullName evidence="1">Diaminopelargonic acid synthase</fullName>
        </alternativeName>
    </domain>
</protein>
<name>BIODA_EMENI</name>
<accession>Q5AYI6</accession>
<accession>C8V1D0</accession>
<keyword id="KW-0032">Aminotransferase</keyword>
<keyword id="KW-0067">ATP-binding</keyword>
<keyword id="KW-0093">Biotin biosynthesis</keyword>
<keyword id="KW-0436">Ligase</keyword>
<keyword id="KW-0460">Magnesium</keyword>
<keyword id="KW-0479">Metal-binding</keyword>
<keyword id="KW-0496">Mitochondrion</keyword>
<keyword id="KW-0511">Multifunctional enzyme</keyword>
<keyword id="KW-0547">Nucleotide-binding</keyword>
<keyword id="KW-0663">Pyridoxal phosphate</keyword>
<keyword id="KW-1185">Reference proteome</keyword>
<keyword id="KW-0949">S-adenosyl-L-methionine</keyword>
<keyword id="KW-0808">Transferase</keyword>
<keyword id="KW-0809">Transit peptide</keyword>
<reference key="1">
    <citation type="journal article" date="2005" name="Nature">
        <title>Sequencing of Aspergillus nidulans and comparative analysis with A. fumigatus and A. oryzae.</title>
        <authorList>
            <person name="Galagan J.E."/>
            <person name="Calvo S.E."/>
            <person name="Cuomo C."/>
            <person name="Ma L.-J."/>
            <person name="Wortman J.R."/>
            <person name="Batzoglou S."/>
            <person name="Lee S.-I."/>
            <person name="Bastuerkmen M."/>
            <person name="Spevak C.C."/>
            <person name="Clutterbuck J."/>
            <person name="Kapitonov V."/>
            <person name="Jurka J."/>
            <person name="Scazzocchio C."/>
            <person name="Farman M.L."/>
            <person name="Butler J."/>
            <person name="Purcell S."/>
            <person name="Harris S."/>
            <person name="Braus G.H."/>
            <person name="Draht O."/>
            <person name="Busch S."/>
            <person name="D'Enfert C."/>
            <person name="Bouchier C."/>
            <person name="Goldman G.H."/>
            <person name="Bell-Pedersen D."/>
            <person name="Griffiths-Jones S."/>
            <person name="Doonan J.H."/>
            <person name="Yu J."/>
            <person name="Vienken K."/>
            <person name="Pain A."/>
            <person name="Freitag M."/>
            <person name="Selker E.U."/>
            <person name="Archer D.B."/>
            <person name="Penalva M.A."/>
            <person name="Oakley B.R."/>
            <person name="Momany M."/>
            <person name="Tanaka T."/>
            <person name="Kumagai T."/>
            <person name="Asai K."/>
            <person name="Machida M."/>
            <person name="Nierman W.C."/>
            <person name="Denning D.W."/>
            <person name="Caddick M.X."/>
            <person name="Hynes M."/>
            <person name="Paoletti M."/>
            <person name="Fischer R."/>
            <person name="Miller B.L."/>
            <person name="Dyer P.S."/>
            <person name="Sachs M.S."/>
            <person name="Osmani S.A."/>
            <person name="Birren B.W."/>
        </authorList>
    </citation>
    <scope>NUCLEOTIDE SEQUENCE [LARGE SCALE GENOMIC DNA]</scope>
    <source>
        <strain>FGSC A4 / ATCC 38163 / CBS 112.46 / NRRL 194 / M139</strain>
    </source>
</reference>
<reference key="2">
    <citation type="journal article" date="2009" name="Fungal Genet. Biol.">
        <title>The 2008 update of the Aspergillus nidulans genome annotation: a community effort.</title>
        <authorList>
            <person name="Wortman J.R."/>
            <person name="Gilsenan J.M."/>
            <person name="Joardar V."/>
            <person name="Deegan J."/>
            <person name="Clutterbuck J."/>
            <person name="Andersen M.R."/>
            <person name="Archer D."/>
            <person name="Bencina M."/>
            <person name="Braus G."/>
            <person name="Coutinho P."/>
            <person name="von Dohren H."/>
            <person name="Doonan J."/>
            <person name="Driessen A.J."/>
            <person name="Durek P."/>
            <person name="Espeso E."/>
            <person name="Fekete E."/>
            <person name="Flipphi M."/>
            <person name="Estrada C.G."/>
            <person name="Geysens S."/>
            <person name="Goldman G."/>
            <person name="de Groot P.W."/>
            <person name="Hansen K."/>
            <person name="Harris S.D."/>
            <person name="Heinekamp T."/>
            <person name="Helmstaedt K."/>
            <person name="Henrissat B."/>
            <person name="Hofmann G."/>
            <person name="Homan T."/>
            <person name="Horio T."/>
            <person name="Horiuchi H."/>
            <person name="James S."/>
            <person name="Jones M."/>
            <person name="Karaffa L."/>
            <person name="Karanyi Z."/>
            <person name="Kato M."/>
            <person name="Keller N."/>
            <person name="Kelly D.E."/>
            <person name="Kiel J.A."/>
            <person name="Kim J.M."/>
            <person name="van der Klei I.J."/>
            <person name="Klis F.M."/>
            <person name="Kovalchuk A."/>
            <person name="Krasevec N."/>
            <person name="Kubicek C.P."/>
            <person name="Liu B."/>
            <person name="Maccabe A."/>
            <person name="Meyer V."/>
            <person name="Mirabito P."/>
            <person name="Miskei M."/>
            <person name="Mos M."/>
            <person name="Mullins J."/>
            <person name="Nelson D.R."/>
            <person name="Nielsen J."/>
            <person name="Oakley B.R."/>
            <person name="Osmani S.A."/>
            <person name="Pakula T."/>
            <person name="Paszewski A."/>
            <person name="Paulsen I."/>
            <person name="Pilsyk S."/>
            <person name="Pocsi I."/>
            <person name="Punt P.J."/>
            <person name="Ram A.F."/>
            <person name="Ren Q."/>
            <person name="Robellet X."/>
            <person name="Robson G."/>
            <person name="Seiboth B."/>
            <person name="van Solingen P."/>
            <person name="Specht T."/>
            <person name="Sun J."/>
            <person name="Taheri-Talesh N."/>
            <person name="Takeshita N."/>
            <person name="Ussery D."/>
            <person name="vanKuyk P.A."/>
            <person name="Visser H."/>
            <person name="van de Vondervoort P.J."/>
            <person name="de Vries R.P."/>
            <person name="Walton J."/>
            <person name="Xiang X."/>
            <person name="Xiong Y."/>
            <person name="Zeng A.P."/>
            <person name="Brandt B.W."/>
            <person name="Cornell M.J."/>
            <person name="van den Hondel C.A."/>
            <person name="Visser J."/>
            <person name="Oliver S.G."/>
            <person name="Turner G."/>
        </authorList>
    </citation>
    <scope>GENOME REANNOTATION</scope>
    <source>
        <strain>FGSC A4 / ATCC 38163 / CBS 112.46 / NRRL 194 / M139</strain>
    </source>
</reference>
<reference key="3">
    <citation type="journal article" date="2011" name="Fungal Genet. Biol.">
        <title>Characterization of the Aspergillus nidulans biotin biosynthetic gene cluster and use of the bioDA gene as a new transformation marker.</title>
        <authorList>
            <person name="Magliano P."/>
            <person name="Flipphi M."/>
            <person name="Sanglard D."/>
            <person name="Poirier Y."/>
        </authorList>
    </citation>
    <scope>FUNCTION</scope>
    <scope>INDUCTION</scope>
    <scope>MUTAGENESIS OF GLY-645</scope>
    <scope>PATHWAY</scope>
    <scope>BIOTECHNOLOGY</scope>
</reference>
<proteinExistence type="evidence at protein level"/>
<evidence type="ECO:0000250" key="1">
    <source>
        <dbReference type="UniProtKB" id="B0F481"/>
    </source>
</evidence>
<evidence type="ECO:0000250" key="2">
    <source>
        <dbReference type="UniProtKB" id="P12995"/>
    </source>
</evidence>
<evidence type="ECO:0000250" key="3">
    <source>
        <dbReference type="UniProtKB" id="P13000"/>
    </source>
</evidence>
<evidence type="ECO:0000269" key="4">
    <source>
    </source>
</evidence>
<evidence type="ECO:0000303" key="5">
    <source>
    </source>
</evidence>
<evidence type="ECO:0000305" key="6"/>
<evidence type="ECO:0000305" key="7">
    <source>
    </source>
</evidence>
<organism>
    <name type="scientific">Emericella nidulans (strain FGSC A4 / ATCC 38163 / CBS 112.46 / NRRL 194 / M139)</name>
    <name type="common">Aspergillus nidulans</name>
    <dbReference type="NCBI Taxonomy" id="227321"/>
    <lineage>
        <taxon>Eukaryota</taxon>
        <taxon>Fungi</taxon>
        <taxon>Dikarya</taxon>
        <taxon>Ascomycota</taxon>
        <taxon>Pezizomycotina</taxon>
        <taxon>Eurotiomycetes</taxon>
        <taxon>Eurotiomycetidae</taxon>
        <taxon>Eurotiales</taxon>
        <taxon>Aspergillaceae</taxon>
        <taxon>Aspergillus</taxon>
        <taxon>Aspergillus subgen. Nidulantes</taxon>
    </lineage>
</organism>
<feature type="chain" id="PRO_0000449412" description="Bifunctional dethiobiotin synthetase/adenosylmethionine-8-amino-7-oxononanoate aminotransferase">
    <location>
        <begin position="1"/>
        <end position="787"/>
    </location>
</feature>
<feature type="binding site" evidence="3">
    <location>
        <begin position="23"/>
        <end position="28"/>
    </location>
    <ligand>
        <name>ATP</name>
        <dbReference type="ChEBI" id="CHEBI:30616"/>
    </ligand>
</feature>
<feature type="binding site" evidence="1">
    <location>
        <position position="27"/>
    </location>
    <ligand>
        <name>Mg(2+)</name>
        <dbReference type="ChEBI" id="CHEBI:18420"/>
    </ligand>
</feature>
<feature type="binding site" evidence="1">
    <location>
        <position position="54"/>
    </location>
    <ligand>
        <name>substrate</name>
    </ligand>
</feature>
<feature type="binding site" evidence="1">
    <location>
        <position position="61"/>
    </location>
    <ligand>
        <name>Mg(2+)</name>
        <dbReference type="ChEBI" id="CHEBI:18420"/>
    </ligand>
</feature>
<feature type="binding site" evidence="3">
    <location>
        <begin position="123"/>
        <end position="126"/>
    </location>
    <ligand>
        <name>ATP</name>
        <dbReference type="ChEBI" id="CHEBI:30616"/>
    </ligand>
</feature>
<feature type="binding site" evidence="1">
    <location>
        <position position="123"/>
    </location>
    <ligand>
        <name>Mg(2+)</name>
        <dbReference type="ChEBI" id="CHEBI:18420"/>
    </ligand>
</feature>
<feature type="binding site" evidence="3">
    <location>
        <begin position="184"/>
        <end position="185"/>
    </location>
    <ligand>
        <name>ATP</name>
        <dbReference type="ChEBI" id="CHEBI:30616"/>
    </ligand>
</feature>
<feature type="binding site" evidence="1">
    <location>
        <begin position="323"/>
        <end position="324"/>
    </location>
    <ligand>
        <name>(8S)-8-amino-7-oxononanoate</name>
        <dbReference type="ChEBI" id="CHEBI:149468"/>
    </ligand>
</feature>
<feature type="binding site" evidence="1">
    <location>
        <begin position="384"/>
        <end position="385"/>
    </location>
    <ligand>
        <name>pyridoxal 5'-phosphate</name>
        <dbReference type="ChEBI" id="CHEBI:597326"/>
    </ligand>
</feature>
<feature type="binding site" evidence="1">
    <location>
        <position position="421"/>
    </location>
    <ligand>
        <name>(8S)-8-amino-7-oxononanoate</name>
        <dbReference type="ChEBI" id="CHEBI:149468"/>
    </ligand>
</feature>
<feature type="binding site" evidence="1">
    <location>
        <position position="582"/>
    </location>
    <ligand>
        <name>pyridoxal 5'-phosphate</name>
        <dbReference type="ChEBI" id="CHEBI:597326"/>
    </ligand>
</feature>
<feature type="binding site" evidence="1">
    <location>
        <position position="611"/>
    </location>
    <ligand>
        <name>(8S)-8-amino-7-oxononanoate</name>
        <dbReference type="ChEBI" id="CHEBI:149468"/>
    </ligand>
</feature>
<feature type="binding site" evidence="1">
    <location>
        <position position="645"/>
    </location>
    <ligand>
        <name>(8S)-8-amino-7-oxononanoate</name>
        <dbReference type="ChEBI" id="CHEBI:149468"/>
    </ligand>
</feature>
<feature type="binding site" evidence="1">
    <location>
        <begin position="646"/>
        <end position="647"/>
    </location>
    <ligand>
        <name>pyridoxal 5'-phosphate</name>
        <dbReference type="ChEBI" id="CHEBI:597326"/>
    </ligand>
</feature>
<feature type="binding site" evidence="1">
    <location>
        <position position="756"/>
    </location>
    <ligand>
        <name>(8S)-8-amino-7-oxononanoate</name>
        <dbReference type="ChEBI" id="CHEBI:149468"/>
    </ligand>
</feature>
<feature type="site" description="Participates in the substrate recognition with KAPA and in a stacking interaction with the adenine ring of SAM" evidence="2">
    <location>
        <position position="276"/>
    </location>
</feature>
<feature type="mutagenesis site" description="In biA2; leads the requirement of either biotin or dethiobiotin for growth." evidence="4">
    <original>G</original>
    <variation>R</variation>
    <location>
        <position position="645"/>
    </location>
</feature>
<gene>
    <name evidence="5" type="primary">bioDA</name>
    <name type="ORF">ANIA_06644</name>
</gene>
<dbReference type="EC" id="6.3.3.3" evidence="7"/>
<dbReference type="EC" id="2.6.1.62" evidence="7"/>
<dbReference type="EMBL" id="BN001301">
    <property type="protein sequence ID" value="CBF71161.1"/>
    <property type="molecule type" value="Genomic_DNA"/>
</dbReference>
<dbReference type="SMR" id="Q5AYI6"/>
<dbReference type="STRING" id="227321.Q5AYI6"/>
<dbReference type="EnsemblFungi" id="CBF71161">
    <property type="protein sequence ID" value="CBF71161"/>
    <property type="gene ID" value="ANIA_06644"/>
</dbReference>
<dbReference type="KEGG" id="ani:ANIA_06644"/>
<dbReference type="VEuPathDB" id="FungiDB:AN6644"/>
<dbReference type="eggNOG" id="KOG1401">
    <property type="taxonomic scope" value="Eukaryota"/>
</dbReference>
<dbReference type="HOGENOM" id="CLU_010794_0_0_1"/>
<dbReference type="InParanoid" id="Q5AYI6"/>
<dbReference type="OMA" id="KGWASRA"/>
<dbReference type="OrthoDB" id="425114at2759"/>
<dbReference type="UniPathway" id="UPA00078">
    <property type="reaction ID" value="UER00160"/>
</dbReference>
<dbReference type="UniPathway" id="UPA00078">
    <property type="reaction ID" value="UER00161"/>
</dbReference>
<dbReference type="Proteomes" id="UP000000560">
    <property type="component" value="Chromosome I"/>
</dbReference>
<dbReference type="GO" id="GO:0005759">
    <property type="term" value="C:mitochondrial matrix"/>
    <property type="evidence" value="ECO:0007669"/>
    <property type="project" value="UniProtKB-SubCell"/>
</dbReference>
<dbReference type="GO" id="GO:0005739">
    <property type="term" value="C:mitochondrion"/>
    <property type="evidence" value="ECO:0000318"/>
    <property type="project" value="GO_Central"/>
</dbReference>
<dbReference type="GO" id="GO:0004015">
    <property type="term" value="F:adenosylmethionine-8-amino-7-oxononanoate transaminase activity"/>
    <property type="evidence" value="ECO:0000318"/>
    <property type="project" value="GO_Central"/>
</dbReference>
<dbReference type="GO" id="GO:0005524">
    <property type="term" value="F:ATP binding"/>
    <property type="evidence" value="ECO:0007669"/>
    <property type="project" value="UniProtKB-KW"/>
</dbReference>
<dbReference type="GO" id="GO:0004141">
    <property type="term" value="F:dethiobiotin synthase activity"/>
    <property type="evidence" value="ECO:0000318"/>
    <property type="project" value="GO_Central"/>
</dbReference>
<dbReference type="GO" id="GO:0000287">
    <property type="term" value="F:magnesium ion binding"/>
    <property type="evidence" value="ECO:0007669"/>
    <property type="project" value="InterPro"/>
</dbReference>
<dbReference type="GO" id="GO:0030170">
    <property type="term" value="F:pyridoxal phosphate binding"/>
    <property type="evidence" value="ECO:0007669"/>
    <property type="project" value="InterPro"/>
</dbReference>
<dbReference type="GO" id="GO:0009102">
    <property type="term" value="P:biotin biosynthetic process"/>
    <property type="evidence" value="ECO:0000315"/>
    <property type="project" value="AspGD"/>
</dbReference>
<dbReference type="CDD" id="cd03109">
    <property type="entry name" value="DTBS"/>
    <property type="match status" value="1"/>
</dbReference>
<dbReference type="FunFam" id="3.40.50.300:FF:001677">
    <property type="entry name" value="Bifunctional dethiobiotin synthetase/adenosylmethionine-8-amino-7-oxononanoate aminotransferase"/>
    <property type="match status" value="1"/>
</dbReference>
<dbReference type="FunFam" id="3.40.640.10:FF:000122">
    <property type="entry name" value="Bifunctional dethiobiotin synthetase/adenosylmethionine-8-amino-7-oxononanoate aminotransferase"/>
    <property type="match status" value="1"/>
</dbReference>
<dbReference type="FunFam" id="3.90.1150.10:FF:000080">
    <property type="entry name" value="Bifunctional dethiobiotin synthetase/adenosylmethionine-8-amino-7-oxononanoate aminotransferase"/>
    <property type="match status" value="1"/>
</dbReference>
<dbReference type="Gene3D" id="3.90.1150.10">
    <property type="entry name" value="Aspartate Aminotransferase, domain 1"/>
    <property type="match status" value="1"/>
</dbReference>
<dbReference type="Gene3D" id="3.40.50.300">
    <property type="entry name" value="P-loop containing nucleotide triphosphate hydrolases"/>
    <property type="match status" value="1"/>
</dbReference>
<dbReference type="Gene3D" id="3.40.640.10">
    <property type="entry name" value="Type I PLP-dependent aspartate aminotransferase-like (Major domain)"/>
    <property type="match status" value="1"/>
</dbReference>
<dbReference type="HAMAP" id="MF_00336">
    <property type="entry name" value="BioD"/>
    <property type="match status" value="1"/>
</dbReference>
<dbReference type="InterPro" id="IPR005814">
    <property type="entry name" value="Aminotrans_3"/>
</dbReference>
<dbReference type="InterPro" id="IPR049704">
    <property type="entry name" value="Aminotrans_3_PPA_site"/>
</dbReference>
<dbReference type="InterPro" id="IPR004472">
    <property type="entry name" value="DTB_synth_BioD"/>
</dbReference>
<dbReference type="InterPro" id="IPR027417">
    <property type="entry name" value="P-loop_NTPase"/>
</dbReference>
<dbReference type="InterPro" id="IPR015424">
    <property type="entry name" value="PyrdxlP-dep_Trfase"/>
</dbReference>
<dbReference type="InterPro" id="IPR015421">
    <property type="entry name" value="PyrdxlP-dep_Trfase_major"/>
</dbReference>
<dbReference type="InterPro" id="IPR015422">
    <property type="entry name" value="PyrdxlP-dep_Trfase_small"/>
</dbReference>
<dbReference type="PANTHER" id="PTHR42684">
    <property type="entry name" value="ADENOSYLMETHIONINE-8-AMINO-7-OXONONANOATE AMINOTRANSFERASE"/>
    <property type="match status" value="1"/>
</dbReference>
<dbReference type="PANTHER" id="PTHR42684:SF3">
    <property type="entry name" value="ADENOSYLMETHIONINE-8-AMINO-7-OXONONANOATE AMINOTRANSFERASE"/>
    <property type="match status" value="1"/>
</dbReference>
<dbReference type="Pfam" id="PF13500">
    <property type="entry name" value="AAA_26"/>
    <property type="match status" value="1"/>
</dbReference>
<dbReference type="Pfam" id="PF00202">
    <property type="entry name" value="Aminotran_3"/>
    <property type="match status" value="2"/>
</dbReference>
<dbReference type="SUPFAM" id="SSF52540">
    <property type="entry name" value="P-loop containing nucleoside triphosphate hydrolases"/>
    <property type="match status" value="1"/>
</dbReference>
<dbReference type="SUPFAM" id="SSF53383">
    <property type="entry name" value="PLP-dependent transferases"/>
    <property type="match status" value="1"/>
</dbReference>
<dbReference type="PROSITE" id="PS00600">
    <property type="entry name" value="AA_TRANSFER_CLASS_3"/>
    <property type="match status" value="1"/>
</dbReference>
<sequence length="787" mass="86662">MAPVGAALWRSLRAHQVYGANTDVGKTIVSTFLCNAVNRLKNQGKSAFLKPVSTGPLDEADDRHLQRHAPNTLTKCLYQFDEPVSPHIAAKTFAIPRDDEILSSVHRTLSDWANDGVGFALVETAGGVHSPGPNGNSQADLYRPLRLPIILVADSRLGGISSSISAYESLLLRGYDVHSVLLFKDDYYQNHEYLGNYFRGKSIPLVPVPAPPRRPQEQDPDSRARDLEALDKYYSSVTKSTDVVSLLDELVLKNKQRVEYLDEMASRAQKTIWYPFTQHHGMAAKDITPIDSAYDDFFQTYVTADRSAQQGRLQATFDGSASWWTQGLGHGNPGLALSAAYAAGRYGHVMFPGNIHEPALALAESLLKTVDNPRLQKVFYTDNGSTGMEVALKMGLRAACDRYGWDASKEQINILGLKGSYHGDTIGVMDCSEPSTYNQRVEWYRGRGHWFDFPLVKMSQGVWQVEVPATLQASLGGNQQFSSLDAVFDVESRVRSDAGQRYRKYILETIERLVTQEGKKFGALIMEPIILGAGGMLFCDPLFQRCLADVVRGNPQLFNRGRLTEPQPQTDLSWSGLPVIFDEVFTGLYRLGRKSSASFLGVNPDIAVNAKLLTGGLVPLCTTLASNEIFNAFTSPEKRDALLHGHSYTAHAVGCQVALDSLRTMNNMDEDGSWNDFKNDWKQPHAGDTARVWSVWSHKLLHNLSHAESVDGVFAIGSVLSISLKDAEGAGYTSTAAKGLQTRLAAGGPQFNVHSRVLGNVLYLMSSVTSKQETLRTIEGILREALL</sequence>